<dbReference type="EC" id="2.7.1.148" evidence="1"/>
<dbReference type="EMBL" id="AE016822">
    <property type="protein sequence ID" value="AAT89504.1"/>
    <property type="molecule type" value="Genomic_DNA"/>
</dbReference>
<dbReference type="SMR" id="Q6ADP2"/>
<dbReference type="STRING" id="281090.Lxx17480"/>
<dbReference type="KEGG" id="lxx:Lxx17480"/>
<dbReference type="eggNOG" id="COG1947">
    <property type="taxonomic scope" value="Bacteria"/>
</dbReference>
<dbReference type="HOGENOM" id="CLU_053057_1_1_11"/>
<dbReference type="UniPathway" id="UPA00056">
    <property type="reaction ID" value="UER00094"/>
</dbReference>
<dbReference type="Proteomes" id="UP000001306">
    <property type="component" value="Chromosome"/>
</dbReference>
<dbReference type="GO" id="GO:0050515">
    <property type="term" value="F:4-(cytidine 5'-diphospho)-2-C-methyl-D-erythritol kinase activity"/>
    <property type="evidence" value="ECO:0007669"/>
    <property type="project" value="UniProtKB-UniRule"/>
</dbReference>
<dbReference type="GO" id="GO:0005524">
    <property type="term" value="F:ATP binding"/>
    <property type="evidence" value="ECO:0007669"/>
    <property type="project" value="UniProtKB-UniRule"/>
</dbReference>
<dbReference type="GO" id="GO:0019288">
    <property type="term" value="P:isopentenyl diphosphate biosynthetic process, methylerythritol 4-phosphate pathway"/>
    <property type="evidence" value="ECO:0007669"/>
    <property type="project" value="UniProtKB-UniRule"/>
</dbReference>
<dbReference type="GO" id="GO:0016114">
    <property type="term" value="P:terpenoid biosynthetic process"/>
    <property type="evidence" value="ECO:0007669"/>
    <property type="project" value="InterPro"/>
</dbReference>
<dbReference type="Gene3D" id="3.30.230.10">
    <property type="match status" value="1"/>
</dbReference>
<dbReference type="Gene3D" id="3.30.70.890">
    <property type="entry name" value="GHMP kinase, C-terminal domain"/>
    <property type="match status" value="1"/>
</dbReference>
<dbReference type="HAMAP" id="MF_00061">
    <property type="entry name" value="IspE"/>
    <property type="match status" value="1"/>
</dbReference>
<dbReference type="InterPro" id="IPR013750">
    <property type="entry name" value="GHMP_kinase_C_dom"/>
</dbReference>
<dbReference type="InterPro" id="IPR036554">
    <property type="entry name" value="GHMP_kinase_C_sf"/>
</dbReference>
<dbReference type="InterPro" id="IPR006204">
    <property type="entry name" value="GHMP_kinase_N_dom"/>
</dbReference>
<dbReference type="InterPro" id="IPR004424">
    <property type="entry name" value="IspE"/>
</dbReference>
<dbReference type="InterPro" id="IPR020568">
    <property type="entry name" value="Ribosomal_Su5_D2-typ_SF"/>
</dbReference>
<dbReference type="InterPro" id="IPR014721">
    <property type="entry name" value="Ribsml_uS5_D2-typ_fold_subgr"/>
</dbReference>
<dbReference type="NCBIfam" id="TIGR00154">
    <property type="entry name" value="ispE"/>
    <property type="match status" value="1"/>
</dbReference>
<dbReference type="NCBIfam" id="NF002870">
    <property type="entry name" value="PRK03188.1"/>
    <property type="match status" value="1"/>
</dbReference>
<dbReference type="PANTHER" id="PTHR43527">
    <property type="entry name" value="4-DIPHOSPHOCYTIDYL-2-C-METHYL-D-ERYTHRITOL KINASE, CHLOROPLASTIC"/>
    <property type="match status" value="1"/>
</dbReference>
<dbReference type="PANTHER" id="PTHR43527:SF2">
    <property type="entry name" value="4-DIPHOSPHOCYTIDYL-2-C-METHYL-D-ERYTHRITOL KINASE, CHLOROPLASTIC"/>
    <property type="match status" value="1"/>
</dbReference>
<dbReference type="Pfam" id="PF08544">
    <property type="entry name" value="GHMP_kinases_C"/>
    <property type="match status" value="1"/>
</dbReference>
<dbReference type="Pfam" id="PF00288">
    <property type="entry name" value="GHMP_kinases_N"/>
    <property type="match status" value="1"/>
</dbReference>
<dbReference type="PIRSF" id="PIRSF010376">
    <property type="entry name" value="IspE"/>
    <property type="match status" value="1"/>
</dbReference>
<dbReference type="SUPFAM" id="SSF55060">
    <property type="entry name" value="GHMP Kinase, C-terminal domain"/>
    <property type="match status" value="1"/>
</dbReference>
<dbReference type="SUPFAM" id="SSF54211">
    <property type="entry name" value="Ribosomal protein S5 domain 2-like"/>
    <property type="match status" value="1"/>
</dbReference>
<gene>
    <name evidence="1" type="primary">ispE</name>
    <name type="ordered locus">Lxx17480</name>
</gene>
<name>ISPE_LEIXX</name>
<comment type="function">
    <text evidence="1">Catalyzes the phosphorylation of the position 2 hydroxy group of 4-diphosphocytidyl-2C-methyl-D-erythritol.</text>
</comment>
<comment type="catalytic activity">
    <reaction evidence="1">
        <text>4-CDP-2-C-methyl-D-erythritol + ATP = 4-CDP-2-C-methyl-D-erythritol 2-phosphate + ADP + H(+)</text>
        <dbReference type="Rhea" id="RHEA:18437"/>
        <dbReference type="ChEBI" id="CHEBI:15378"/>
        <dbReference type="ChEBI" id="CHEBI:30616"/>
        <dbReference type="ChEBI" id="CHEBI:57823"/>
        <dbReference type="ChEBI" id="CHEBI:57919"/>
        <dbReference type="ChEBI" id="CHEBI:456216"/>
        <dbReference type="EC" id="2.7.1.148"/>
    </reaction>
</comment>
<comment type="pathway">
    <text evidence="1">Isoprenoid biosynthesis; isopentenyl diphosphate biosynthesis via DXP pathway; isopentenyl diphosphate from 1-deoxy-D-xylulose 5-phosphate: step 3/6.</text>
</comment>
<comment type="similarity">
    <text evidence="1">Belongs to the GHMP kinase family. IspE subfamily.</text>
</comment>
<reference key="1">
    <citation type="journal article" date="2004" name="Mol. Plant Microbe Interact.">
        <title>The genome sequence of the Gram-positive sugarcane pathogen Leifsonia xyli subsp. xyli.</title>
        <authorList>
            <person name="Monteiro-Vitorello C.B."/>
            <person name="Camargo L.E.A."/>
            <person name="Van Sluys M.A."/>
            <person name="Kitajima J.P."/>
            <person name="Truffi D."/>
            <person name="do Amaral A.M."/>
            <person name="Harakava R."/>
            <person name="de Oliveira J.C.F."/>
            <person name="Wood D."/>
            <person name="de Oliveira M.C."/>
            <person name="Miyaki C.Y."/>
            <person name="Takita M.A."/>
            <person name="da Silva A.C.R."/>
            <person name="Furlan L.R."/>
            <person name="Carraro D.M."/>
            <person name="Camarotte G."/>
            <person name="Almeida N.F. Jr."/>
            <person name="Carrer H."/>
            <person name="Coutinho L.L."/>
            <person name="El-Dorry H.A."/>
            <person name="Ferro M.I.T."/>
            <person name="Gagliardi P.R."/>
            <person name="Giglioti E."/>
            <person name="Goldman M.H.S."/>
            <person name="Goldman G.H."/>
            <person name="Kimura E.T."/>
            <person name="Ferro E.S."/>
            <person name="Kuramae E.E."/>
            <person name="Lemos E.G.M."/>
            <person name="Lemos M.V.F."/>
            <person name="Mauro S.M.Z."/>
            <person name="Machado M.A."/>
            <person name="Marino C.L."/>
            <person name="Menck C.F."/>
            <person name="Nunes L.R."/>
            <person name="Oliveira R.C."/>
            <person name="Pereira G.G."/>
            <person name="Siqueira W."/>
            <person name="de Souza A.A."/>
            <person name="Tsai S.M."/>
            <person name="Zanca A.S."/>
            <person name="Simpson A.J.G."/>
            <person name="Brumbley S.M."/>
            <person name="Setubal J.C."/>
        </authorList>
    </citation>
    <scope>NUCLEOTIDE SEQUENCE [LARGE SCALE GENOMIC DNA]</scope>
    <source>
        <strain>CTCB07</strain>
    </source>
</reference>
<feature type="chain" id="PRO_0000189227" description="4-diphosphocytidyl-2-C-methyl-D-erythritol kinase">
    <location>
        <begin position="1"/>
        <end position="306"/>
    </location>
</feature>
<feature type="active site" evidence="1">
    <location>
        <position position="11"/>
    </location>
</feature>
<feature type="active site" evidence="1">
    <location>
        <position position="140"/>
    </location>
</feature>
<feature type="binding site" evidence="1">
    <location>
        <begin position="98"/>
        <end position="108"/>
    </location>
    <ligand>
        <name>ATP</name>
        <dbReference type="ChEBI" id="CHEBI:30616"/>
    </ligand>
</feature>
<accession>Q6ADP2</accession>
<keyword id="KW-0067">ATP-binding</keyword>
<keyword id="KW-0414">Isoprene biosynthesis</keyword>
<keyword id="KW-0418">Kinase</keyword>
<keyword id="KW-0547">Nucleotide-binding</keyword>
<keyword id="KW-1185">Reference proteome</keyword>
<keyword id="KW-0808">Transferase</keyword>
<proteinExistence type="inferred from homology"/>
<evidence type="ECO:0000255" key="1">
    <source>
        <dbReference type="HAMAP-Rule" id="MF_00061"/>
    </source>
</evidence>
<organism>
    <name type="scientific">Leifsonia xyli subsp. xyli (strain CTCB07)</name>
    <dbReference type="NCBI Taxonomy" id="281090"/>
    <lineage>
        <taxon>Bacteria</taxon>
        <taxon>Bacillati</taxon>
        <taxon>Actinomycetota</taxon>
        <taxon>Actinomycetes</taxon>
        <taxon>Micrococcales</taxon>
        <taxon>Microbacteriaceae</taxon>
        <taxon>Leifsonia</taxon>
    </lineage>
</organism>
<sequence>MDAVHVRAPGKVNVFMRVGPLRHDGYHDVATAYQALSLYEDVRAYPADDISVTFAGGSVDTSALPTDGTNLAVKAAKLLAKRTGFTGGVRLEIDKRVPIAGGMGGGSADAAATLVACDALWGTELGREELLALAARLGADVPFALVGGTAIGTGRGDRLSPALATGQFHWVLAFAEGQLSTPTVYSELDRHRERHASEIPPAQRAPGVDAGVLQALRAGDAAMLAEVLSNDLQAPAIHLAPSIAEVLELGELNGALAGIVSGSGPTVAFLAADLDNALDVQIALSAARVRVVRATGPVHGARVLSD</sequence>
<protein>
    <recommendedName>
        <fullName evidence="1">4-diphosphocytidyl-2-C-methyl-D-erythritol kinase</fullName>
        <shortName evidence="1">CMK</shortName>
        <ecNumber evidence="1">2.7.1.148</ecNumber>
    </recommendedName>
    <alternativeName>
        <fullName evidence="1">4-(cytidine-5'-diphospho)-2-C-methyl-D-erythritol kinase</fullName>
    </alternativeName>
</protein>